<name>FGF1_SHEEP</name>
<comment type="function">
    <text evidence="3">Plays an important role in the regulation of cell survival, cell division, angiogenesis, cell differentiation and cell migration. Functions as a potent mitogen in vitro. Acts as a ligand for FGFR1 and integrins. Binds to FGFR1 in the presence of heparin leading to FGFR1 dimerization and activation via sequential autophosphorylation on tyrosine residues which act as docking sites for interacting proteins, leading to the activation of several signaling cascades. Binds to integrin ITGAV:ITGB3. Its binding to integrin, subsequent ternary complex formation with integrin and FGFR1, and the recruitment of PTPN11 to the complex are essential for FGF1 signaling. Induces the phosphorylation and activation of FGFR1, FRS2, MAPK3/ERK1, MAPK1/ERK2 and AKT1. Can induce angiogenesis.</text>
</comment>
<comment type="subunit">
    <text evidence="3">Monomer. Homodimer. Interacts with FGFR1, FGFR2, FGFR3 and FGFR4. Affinity between fibroblast growth factors (FGFs) and their receptors is increased by heparan sulfate glycosaminoglycans that function as coreceptors. Found in a complex with FGFBP1, FGF1 and FGF2. Interacts with FGFBP1. Part of a Cu(2+)-dependent multiprotein aggregate containing FGF1, S100A13 and SYT1. Interacts with SYT1. Interacts with S100A13 (By similarity). Interacts with LRRC59 (By similarity). Interacts with CSNKA, CSNKB and FIBP (By similarity). While binding with LRRC59, CSNKA and FIBP seem mutually exclusive, CSNKB and FIBP may cooperatively interact with FGF1. Forms a ternary complex with FGFR1 and ITGAV:ITGB3 and induces the recruitment of PTPN11 to the complex (By similarity).</text>
</comment>
<comment type="subcellular location">
    <subcellularLocation>
        <location>Secreted</location>
    </subcellularLocation>
    <subcellularLocation>
        <location evidence="1">Cytoplasm</location>
    </subcellularLocation>
    <subcellularLocation>
        <location evidence="1">Cytoplasm</location>
        <location evidence="1">Cell cortex</location>
    </subcellularLocation>
    <subcellularLocation>
        <location evidence="1">Cytoplasm</location>
        <location evidence="1">Cytosol</location>
    </subcellularLocation>
    <subcellularLocation>
        <location evidence="1">Nucleus</location>
    </subcellularLocation>
    <text evidence="1">Lacks a cleavable signal sequence. Within the cytoplasm, it is transported to the cell membrane and then secreted by a non-classical pathway that requires Cu(2+) ions and S100A13. Secreted in a complex with SYT1. Binding of exogenous FGF1 to FGFR facilitates endocytosis followed by translocation of FGF1 across endosomal membrane into the cytosol. Nuclear import from the cytosol requires the classical nuclear import machinery, involving proteins KPNA1 and KPNB1, as well as LRRC59 (By similarity).</text>
</comment>
<comment type="PTM">
    <text evidence="1">In the nucleus, phosphorylated by PKC/PRKCD.</text>
</comment>
<comment type="similarity">
    <text evidence="4">Belongs to the heparin-binding growth factors family.</text>
</comment>
<evidence type="ECO:0000250" key="1"/>
<evidence type="ECO:0000250" key="2">
    <source>
        <dbReference type="UniProtKB" id="P03968"/>
    </source>
</evidence>
<evidence type="ECO:0000250" key="3">
    <source>
        <dbReference type="UniProtKB" id="P05230"/>
    </source>
</evidence>
<evidence type="ECO:0000305" key="4"/>
<sequence>MAEGETTTFRALTEKFNLPLGNYKKPKLLYCSNGGYFLRILPDGRVDGTKDRSDQHIQLQLYAESIGEVYIKSTETGQFLAMDTNGLLYGSQTPSEECLFLERLEENHYNTYISKKHAEKNWFIGLKKNGSSKLGPRTHFGQKAILFLPLPVSSD</sequence>
<organism>
    <name type="scientific">Ovis aries</name>
    <name type="common">Sheep</name>
    <dbReference type="NCBI Taxonomy" id="9940"/>
    <lineage>
        <taxon>Eukaryota</taxon>
        <taxon>Metazoa</taxon>
        <taxon>Chordata</taxon>
        <taxon>Craniata</taxon>
        <taxon>Vertebrata</taxon>
        <taxon>Euteleostomi</taxon>
        <taxon>Mammalia</taxon>
        <taxon>Eutheria</taxon>
        <taxon>Laurasiatheria</taxon>
        <taxon>Artiodactyla</taxon>
        <taxon>Ruminantia</taxon>
        <taxon>Pecora</taxon>
        <taxon>Bovidae</taxon>
        <taxon>Caprinae</taxon>
        <taxon>Ovis</taxon>
    </lineage>
</organism>
<protein>
    <recommendedName>
        <fullName>Fibroblast growth factor 1</fullName>
        <shortName>FGF-1</shortName>
    </recommendedName>
    <alternativeName>
        <fullName>Acidic fibroblast growth factor</fullName>
        <shortName>aFGF</shortName>
    </alternativeName>
    <alternativeName>
        <fullName>Heparin-binding growth factor 1</fullName>
        <shortName>HBGF-1</shortName>
    </alternativeName>
</protein>
<feature type="initiator methionine" description="Removed" evidence="2">
    <location>
        <position position="1"/>
    </location>
</feature>
<feature type="propeptide" id="PRO_0000008918" evidence="1">
    <location>
        <begin position="2"/>
        <end position="15"/>
    </location>
</feature>
<feature type="chain" id="PRO_0000008919" description="Fibroblast growth factor 1">
    <location>
        <begin position="16"/>
        <end position="155"/>
    </location>
</feature>
<feature type="region of interest" description="Heparin-binding" evidence="1">
    <location>
        <begin position="127"/>
        <end position="143"/>
    </location>
</feature>
<feature type="binding site" evidence="1">
    <location>
        <position position="33"/>
    </location>
    <ligand>
        <name>heparin</name>
        <dbReference type="ChEBI" id="CHEBI:28304"/>
    </ligand>
</feature>
<feature type="modified residue" description="N-acetylalanine" evidence="2">
    <location>
        <position position="2"/>
    </location>
</feature>
<gene>
    <name type="primary">FGF1</name>
</gene>
<accession>Q7M303</accession>
<keyword id="KW-0007">Acetylation</keyword>
<keyword id="KW-0037">Angiogenesis</keyword>
<keyword id="KW-0963">Cytoplasm</keyword>
<keyword id="KW-0217">Developmental protein</keyword>
<keyword id="KW-0221">Differentiation</keyword>
<keyword id="KW-0339">Growth factor</keyword>
<keyword id="KW-0358">Heparin-binding</keyword>
<keyword id="KW-0497">Mitogen</keyword>
<keyword id="KW-0539">Nucleus</keyword>
<keyword id="KW-0597">Phosphoprotein</keyword>
<keyword id="KW-1185">Reference proteome</keyword>
<keyword id="KW-0964">Secreted</keyword>
<proteinExistence type="evidence at transcript level"/>
<dbReference type="PIR" id="JW0055">
    <property type="entry name" value="JW0055"/>
</dbReference>
<dbReference type="RefSeq" id="XP_004008958.1">
    <property type="nucleotide sequence ID" value="XM_004008909.5"/>
</dbReference>
<dbReference type="RefSeq" id="XP_004008959.1">
    <property type="nucleotide sequence ID" value="XM_004008910.5"/>
</dbReference>
<dbReference type="RefSeq" id="XP_012034059.1">
    <property type="nucleotide sequence ID" value="XM_012178669.2"/>
</dbReference>
<dbReference type="RefSeq" id="XP_042106896.1">
    <property type="nucleotide sequence ID" value="XM_042250962.2"/>
</dbReference>
<dbReference type="RefSeq" id="XP_042106897.1">
    <property type="nucleotide sequence ID" value="XM_042250963.1"/>
</dbReference>
<dbReference type="RefSeq" id="XP_060271859.1">
    <property type="nucleotide sequence ID" value="XM_060415876.1"/>
</dbReference>
<dbReference type="RefSeq" id="XP_060271860.1">
    <property type="nucleotide sequence ID" value="XM_060415877.1"/>
</dbReference>
<dbReference type="SMR" id="Q7M303"/>
<dbReference type="STRING" id="9940.ENSOARP00000001941"/>
<dbReference type="PaxDb" id="9940-ENSOARP00000001941"/>
<dbReference type="Ensembl" id="ENSOART00020064849">
    <property type="protein sequence ID" value="ENSOARP00020042870"/>
    <property type="gene ID" value="ENSOARG00020036451"/>
</dbReference>
<dbReference type="Ensembl" id="ENSOART00040010131">
    <property type="protein sequence ID" value="ENSOARP00040005090"/>
    <property type="gene ID" value="ENSOARG00040006191"/>
</dbReference>
<dbReference type="Ensembl" id="ENSOART00185003019">
    <property type="protein sequence ID" value="ENSOARP00185001694"/>
    <property type="gene ID" value="ENSOARG00185001785"/>
</dbReference>
<dbReference type="Ensembl" id="ENSOART00215071417">
    <property type="protein sequence ID" value="ENSOARP00215038305"/>
    <property type="gene ID" value="ENSOARG00215042307"/>
</dbReference>
<dbReference type="Ensembl" id="ENSOART00220005091">
    <property type="protein sequence ID" value="ENSOARP00220003517"/>
    <property type="gene ID" value="ENSOARG00220002766"/>
</dbReference>
<dbReference type="Ensembl" id="ENSOART00225018261">
    <property type="protein sequence ID" value="ENSOARP00225008809"/>
    <property type="gene ID" value="ENSOARG00225011053"/>
</dbReference>
<dbReference type="GeneID" id="101109353"/>
<dbReference type="KEGG" id="oas:101109353"/>
<dbReference type="CTD" id="2246"/>
<dbReference type="eggNOG" id="KOG3885">
    <property type="taxonomic scope" value="Eukaryota"/>
</dbReference>
<dbReference type="HOGENOM" id="CLU_081609_5_1_1"/>
<dbReference type="OMA" id="KSWFVGL"/>
<dbReference type="OrthoDB" id="5987799at2759"/>
<dbReference type="Proteomes" id="UP000002356">
    <property type="component" value="Chromosome 5"/>
</dbReference>
<dbReference type="Bgee" id="ENSOARG00000001851">
    <property type="expression patterns" value="Expressed in heart right ventricle and 50 other cell types or tissues"/>
</dbReference>
<dbReference type="GO" id="GO:0005938">
    <property type="term" value="C:cell cortex"/>
    <property type="evidence" value="ECO:0007669"/>
    <property type="project" value="UniProtKB-SubCell"/>
</dbReference>
<dbReference type="GO" id="GO:0005829">
    <property type="term" value="C:cytosol"/>
    <property type="evidence" value="ECO:0000250"/>
    <property type="project" value="UniProtKB"/>
</dbReference>
<dbReference type="GO" id="GO:0031012">
    <property type="term" value="C:extracellular matrix"/>
    <property type="evidence" value="ECO:0007669"/>
    <property type="project" value="Ensembl"/>
</dbReference>
<dbReference type="GO" id="GO:0005576">
    <property type="term" value="C:extracellular region"/>
    <property type="evidence" value="ECO:0000250"/>
    <property type="project" value="UniProtKB"/>
</dbReference>
<dbReference type="GO" id="GO:0005615">
    <property type="term" value="C:extracellular space"/>
    <property type="evidence" value="ECO:0000250"/>
    <property type="project" value="UniProtKB"/>
</dbReference>
<dbReference type="GO" id="GO:0005654">
    <property type="term" value="C:nucleoplasm"/>
    <property type="evidence" value="ECO:0007669"/>
    <property type="project" value="Ensembl"/>
</dbReference>
<dbReference type="GO" id="GO:0005104">
    <property type="term" value="F:fibroblast growth factor receptor binding"/>
    <property type="evidence" value="ECO:0000250"/>
    <property type="project" value="UniProtKB"/>
</dbReference>
<dbReference type="GO" id="GO:0008083">
    <property type="term" value="F:growth factor activity"/>
    <property type="evidence" value="ECO:0000250"/>
    <property type="project" value="UniProtKB"/>
</dbReference>
<dbReference type="GO" id="GO:0008201">
    <property type="term" value="F:heparin binding"/>
    <property type="evidence" value="ECO:0000250"/>
    <property type="project" value="UniProtKB"/>
</dbReference>
<dbReference type="GO" id="GO:0005178">
    <property type="term" value="F:integrin binding"/>
    <property type="evidence" value="ECO:0000250"/>
    <property type="project" value="UniProtKB"/>
</dbReference>
<dbReference type="GO" id="GO:0044548">
    <property type="term" value="F:S100 protein binding"/>
    <property type="evidence" value="ECO:0000250"/>
    <property type="project" value="UniProtKB"/>
</dbReference>
<dbReference type="GO" id="GO:0032148">
    <property type="term" value="P:activation of protein kinase B activity"/>
    <property type="evidence" value="ECO:0000250"/>
    <property type="project" value="UniProtKB"/>
</dbReference>
<dbReference type="GO" id="GO:0001525">
    <property type="term" value="P:angiogenesis"/>
    <property type="evidence" value="ECO:0007669"/>
    <property type="project" value="UniProtKB-KW"/>
</dbReference>
<dbReference type="GO" id="GO:0060681">
    <property type="term" value="P:branch elongation involved in ureteric bud branching"/>
    <property type="evidence" value="ECO:0000250"/>
    <property type="project" value="UniProtKB"/>
</dbReference>
<dbReference type="GO" id="GO:0030154">
    <property type="term" value="P:cell differentiation"/>
    <property type="evidence" value="ECO:0007669"/>
    <property type="project" value="UniProtKB-KW"/>
</dbReference>
<dbReference type="GO" id="GO:0034605">
    <property type="term" value="P:cellular response to heat"/>
    <property type="evidence" value="ECO:0000250"/>
    <property type="project" value="UniProtKB"/>
</dbReference>
<dbReference type="GO" id="GO:0050673">
    <property type="term" value="P:epithelial cell proliferation"/>
    <property type="evidence" value="ECO:0007669"/>
    <property type="project" value="Ensembl"/>
</dbReference>
<dbReference type="GO" id="GO:0008543">
    <property type="term" value="P:fibroblast growth factor receptor signaling pathway"/>
    <property type="evidence" value="ECO:0000250"/>
    <property type="project" value="UniProtKB"/>
</dbReference>
<dbReference type="GO" id="GO:0030324">
    <property type="term" value="P:lung development"/>
    <property type="evidence" value="ECO:0007669"/>
    <property type="project" value="Ensembl"/>
</dbReference>
<dbReference type="GO" id="GO:0072163">
    <property type="term" value="P:mesonephric epithelium development"/>
    <property type="evidence" value="ECO:0000250"/>
    <property type="project" value="UniProtKB"/>
</dbReference>
<dbReference type="GO" id="GO:0001759">
    <property type="term" value="P:organ induction"/>
    <property type="evidence" value="ECO:0007669"/>
    <property type="project" value="Ensembl"/>
</dbReference>
<dbReference type="GO" id="GO:0045766">
    <property type="term" value="P:positive regulation of angiogenesis"/>
    <property type="evidence" value="ECO:0000250"/>
    <property type="project" value="UniProtKB"/>
</dbReference>
<dbReference type="GO" id="GO:0051781">
    <property type="term" value="P:positive regulation of cell division"/>
    <property type="evidence" value="ECO:0000250"/>
    <property type="project" value="UniProtKB"/>
</dbReference>
<dbReference type="GO" id="GO:0030335">
    <property type="term" value="P:positive regulation of cell migration"/>
    <property type="evidence" value="ECO:0000250"/>
    <property type="project" value="UniProtKB"/>
</dbReference>
<dbReference type="GO" id="GO:0008284">
    <property type="term" value="P:positive regulation of cell population proliferation"/>
    <property type="evidence" value="ECO:0000250"/>
    <property type="project" value="UniProtKB"/>
</dbReference>
<dbReference type="GO" id="GO:0045542">
    <property type="term" value="P:positive regulation of cholesterol biosynthetic process"/>
    <property type="evidence" value="ECO:0000250"/>
    <property type="project" value="UniProtKB"/>
</dbReference>
<dbReference type="GO" id="GO:0010595">
    <property type="term" value="P:positive regulation of endothelial cell migration"/>
    <property type="evidence" value="ECO:0000250"/>
    <property type="project" value="UniProtKB"/>
</dbReference>
<dbReference type="GO" id="GO:0050679">
    <property type="term" value="P:positive regulation of epithelial cell proliferation"/>
    <property type="evidence" value="ECO:0007669"/>
    <property type="project" value="Ensembl"/>
</dbReference>
<dbReference type="GO" id="GO:0070374">
    <property type="term" value="P:positive regulation of ERK1 and ERK2 cascade"/>
    <property type="evidence" value="ECO:0000250"/>
    <property type="project" value="UniProtKB"/>
</dbReference>
<dbReference type="GO" id="GO:1902533">
    <property type="term" value="P:positive regulation of intracellular signal transduction"/>
    <property type="evidence" value="ECO:0000250"/>
    <property type="project" value="UniProtKB"/>
</dbReference>
<dbReference type="GO" id="GO:1903672">
    <property type="term" value="P:positive regulation of sprouting angiogenesis"/>
    <property type="evidence" value="ECO:0000250"/>
    <property type="project" value="UniProtKB"/>
</dbReference>
<dbReference type="GO" id="GO:0045944">
    <property type="term" value="P:positive regulation of transcription by RNA polymerase II"/>
    <property type="evidence" value="ECO:0000250"/>
    <property type="project" value="UniProtKB"/>
</dbReference>
<dbReference type="GO" id="GO:2000544">
    <property type="term" value="P:regulation of endothelial cell chemotaxis to fibroblast growth factor"/>
    <property type="evidence" value="ECO:0007669"/>
    <property type="project" value="Ensembl"/>
</dbReference>
<dbReference type="GO" id="GO:1901509">
    <property type="term" value="P:regulation of endothelial tube morphogenesis"/>
    <property type="evidence" value="ECO:0000250"/>
    <property type="project" value="UniProtKB"/>
</dbReference>
<dbReference type="GO" id="GO:0042060">
    <property type="term" value="P:wound healing"/>
    <property type="evidence" value="ECO:0007669"/>
    <property type="project" value="Ensembl"/>
</dbReference>
<dbReference type="CDD" id="cd23313">
    <property type="entry name" value="beta-trefoil_FGF1"/>
    <property type="match status" value="1"/>
</dbReference>
<dbReference type="FunFam" id="2.80.10.50:FF:000020">
    <property type="entry name" value="Fibroblast growth factor 1"/>
    <property type="match status" value="1"/>
</dbReference>
<dbReference type="Gene3D" id="2.80.10.50">
    <property type="match status" value="1"/>
</dbReference>
<dbReference type="InterPro" id="IPR002209">
    <property type="entry name" value="Fibroblast_GF_fam"/>
</dbReference>
<dbReference type="InterPro" id="IPR008996">
    <property type="entry name" value="IL1/FGF"/>
</dbReference>
<dbReference type="PANTHER" id="PTHR11486">
    <property type="entry name" value="FIBROBLAST GROWTH FACTOR"/>
    <property type="match status" value="1"/>
</dbReference>
<dbReference type="Pfam" id="PF00167">
    <property type="entry name" value="FGF"/>
    <property type="match status" value="1"/>
</dbReference>
<dbReference type="PRINTS" id="PR00263">
    <property type="entry name" value="HBGFFGF"/>
</dbReference>
<dbReference type="PRINTS" id="PR00262">
    <property type="entry name" value="IL1HBGF"/>
</dbReference>
<dbReference type="SMART" id="SM00442">
    <property type="entry name" value="FGF"/>
    <property type="match status" value="1"/>
</dbReference>
<dbReference type="SUPFAM" id="SSF50353">
    <property type="entry name" value="Cytokine"/>
    <property type="match status" value="1"/>
</dbReference>
<dbReference type="PROSITE" id="PS00247">
    <property type="entry name" value="HBGF_FGF"/>
    <property type="match status" value="1"/>
</dbReference>
<reference key="1">
    <citation type="journal article" date="1998" name="Biochem. Biophys. Res. Commun.">
        <title>Primary structure of ovine fibroblast growth factor-1 deduced by protein and cDNA analysis.</title>
        <authorList>
            <person name="Grieb T.W."/>
            <person name="Ring M."/>
            <person name="Brown E."/>
            <person name="Palmer C."/>
            <person name="Belle N."/>
            <person name="Donjerkovic D."/>
            <person name="Chang H."/>
            <person name="Yun J."/>
            <person name="Subramanian R."/>
            <person name="Forozan F."/>
            <person name="Guo Y."/>
            <person name="Vertes A."/>
            <person name="Winkles J.A."/>
            <person name="Burgess W.H."/>
        </authorList>
    </citation>
    <scope>NUCLEOTIDE SEQUENCE [MRNA]</scope>
</reference>